<comment type="function">
    <text evidence="1">Catalyzes the conversion of GTP to 2,5-diamino-6-ribosylamino-4(3H)-pyrimidinone 5'-phosphate (DARP), formate and pyrophosphate.</text>
</comment>
<comment type="catalytic activity">
    <reaction evidence="1">
        <text>GTP + 4 H2O = 2,5-diamino-6-hydroxy-4-(5-phosphoribosylamino)-pyrimidine + formate + 2 phosphate + 3 H(+)</text>
        <dbReference type="Rhea" id="RHEA:23704"/>
        <dbReference type="ChEBI" id="CHEBI:15377"/>
        <dbReference type="ChEBI" id="CHEBI:15378"/>
        <dbReference type="ChEBI" id="CHEBI:15740"/>
        <dbReference type="ChEBI" id="CHEBI:37565"/>
        <dbReference type="ChEBI" id="CHEBI:43474"/>
        <dbReference type="ChEBI" id="CHEBI:58614"/>
        <dbReference type="EC" id="3.5.4.25"/>
    </reaction>
</comment>
<comment type="cofactor">
    <cofactor evidence="1">
        <name>Zn(2+)</name>
        <dbReference type="ChEBI" id="CHEBI:29105"/>
    </cofactor>
    <text evidence="1">Binds 1 zinc ion per subunit.</text>
</comment>
<comment type="pathway">
    <text evidence="1">Cofactor biosynthesis; riboflavin biosynthesis; 5-amino-6-(D-ribitylamino)uracil from GTP: step 1/4.</text>
</comment>
<comment type="subunit">
    <text evidence="1">Homodimer.</text>
</comment>
<comment type="similarity">
    <text evidence="1">Belongs to the GTP cyclohydrolase II family.</text>
</comment>
<organism>
    <name type="scientific">Escherichia coli O7:K1 (strain IAI39 / ExPEC)</name>
    <dbReference type="NCBI Taxonomy" id="585057"/>
    <lineage>
        <taxon>Bacteria</taxon>
        <taxon>Pseudomonadati</taxon>
        <taxon>Pseudomonadota</taxon>
        <taxon>Gammaproteobacteria</taxon>
        <taxon>Enterobacterales</taxon>
        <taxon>Enterobacteriaceae</taxon>
        <taxon>Escherichia</taxon>
    </lineage>
</organism>
<accession>B7NVQ1</accession>
<sequence>MQLKRVAEAKLPTPWGDFLMVGFEELATGHDHVALVYGDISGHTPVLARVHSECLTGDALFSLRCDCGFQLEAALTQIAEEGRGILLYHRQEGRNIGLLNKIRAYALQDQGYDTVEANHQLGFAADERDFTLCADMFKLLGVNEVRLLTNNPKKVEILTEAGINIVERVPLIVGRNPNNEHYLDTKAEKMGHLLNK</sequence>
<gene>
    <name evidence="1" type="primary">ribA</name>
    <name type="ordered locus">ECIAI39_1618</name>
</gene>
<protein>
    <recommendedName>
        <fullName evidence="1">GTP cyclohydrolase-2</fullName>
        <ecNumber evidence="1">3.5.4.25</ecNumber>
    </recommendedName>
    <alternativeName>
        <fullName evidence="1">GTP cyclohydrolase II</fullName>
    </alternativeName>
</protein>
<feature type="chain" id="PRO_1000118427" description="GTP cyclohydrolase-2">
    <location>
        <begin position="1"/>
        <end position="196"/>
    </location>
</feature>
<feature type="active site" description="Proton acceptor" evidence="1">
    <location>
        <position position="126"/>
    </location>
</feature>
<feature type="active site" description="Nucleophile" evidence="1">
    <location>
        <position position="128"/>
    </location>
</feature>
<feature type="binding site" evidence="1">
    <location>
        <begin position="49"/>
        <end position="53"/>
    </location>
    <ligand>
        <name>GTP</name>
        <dbReference type="ChEBI" id="CHEBI:37565"/>
    </ligand>
</feature>
<feature type="binding site" evidence="1">
    <location>
        <position position="54"/>
    </location>
    <ligand>
        <name>Zn(2+)</name>
        <dbReference type="ChEBI" id="CHEBI:29105"/>
        <note>catalytic</note>
    </ligand>
</feature>
<feature type="binding site" evidence="1">
    <location>
        <position position="65"/>
    </location>
    <ligand>
        <name>Zn(2+)</name>
        <dbReference type="ChEBI" id="CHEBI:29105"/>
        <note>catalytic</note>
    </ligand>
</feature>
<feature type="binding site" evidence="1">
    <location>
        <position position="67"/>
    </location>
    <ligand>
        <name>Zn(2+)</name>
        <dbReference type="ChEBI" id="CHEBI:29105"/>
        <note>catalytic</note>
    </ligand>
</feature>
<feature type="binding site" evidence="1">
    <location>
        <position position="70"/>
    </location>
    <ligand>
        <name>GTP</name>
        <dbReference type="ChEBI" id="CHEBI:37565"/>
    </ligand>
</feature>
<feature type="binding site" evidence="1">
    <location>
        <begin position="92"/>
        <end position="94"/>
    </location>
    <ligand>
        <name>GTP</name>
        <dbReference type="ChEBI" id="CHEBI:37565"/>
    </ligand>
</feature>
<feature type="binding site" evidence="1">
    <location>
        <position position="114"/>
    </location>
    <ligand>
        <name>GTP</name>
        <dbReference type="ChEBI" id="CHEBI:37565"/>
    </ligand>
</feature>
<feature type="binding site" evidence="1">
    <location>
        <position position="149"/>
    </location>
    <ligand>
        <name>GTP</name>
        <dbReference type="ChEBI" id="CHEBI:37565"/>
    </ligand>
</feature>
<feature type="binding site" evidence="1">
    <location>
        <position position="154"/>
    </location>
    <ligand>
        <name>GTP</name>
        <dbReference type="ChEBI" id="CHEBI:37565"/>
    </ligand>
</feature>
<keyword id="KW-0342">GTP-binding</keyword>
<keyword id="KW-0378">Hydrolase</keyword>
<keyword id="KW-0479">Metal-binding</keyword>
<keyword id="KW-0547">Nucleotide-binding</keyword>
<keyword id="KW-0686">Riboflavin biosynthesis</keyword>
<keyword id="KW-0862">Zinc</keyword>
<proteinExistence type="inferred from homology"/>
<reference key="1">
    <citation type="journal article" date="2009" name="PLoS Genet.">
        <title>Organised genome dynamics in the Escherichia coli species results in highly diverse adaptive paths.</title>
        <authorList>
            <person name="Touchon M."/>
            <person name="Hoede C."/>
            <person name="Tenaillon O."/>
            <person name="Barbe V."/>
            <person name="Baeriswyl S."/>
            <person name="Bidet P."/>
            <person name="Bingen E."/>
            <person name="Bonacorsi S."/>
            <person name="Bouchier C."/>
            <person name="Bouvet O."/>
            <person name="Calteau A."/>
            <person name="Chiapello H."/>
            <person name="Clermont O."/>
            <person name="Cruveiller S."/>
            <person name="Danchin A."/>
            <person name="Diard M."/>
            <person name="Dossat C."/>
            <person name="Karoui M.E."/>
            <person name="Frapy E."/>
            <person name="Garry L."/>
            <person name="Ghigo J.M."/>
            <person name="Gilles A.M."/>
            <person name="Johnson J."/>
            <person name="Le Bouguenec C."/>
            <person name="Lescat M."/>
            <person name="Mangenot S."/>
            <person name="Martinez-Jehanne V."/>
            <person name="Matic I."/>
            <person name="Nassif X."/>
            <person name="Oztas S."/>
            <person name="Petit M.A."/>
            <person name="Pichon C."/>
            <person name="Rouy Z."/>
            <person name="Ruf C.S."/>
            <person name="Schneider D."/>
            <person name="Tourret J."/>
            <person name="Vacherie B."/>
            <person name="Vallenet D."/>
            <person name="Medigue C."/>
            <person name="Rocha E.P.C."/>
            <person name="Denamur E."/>
        </authorList>
    </citation>
    <scope>NUCLEOTIDE SEQUENCE [LARGE SCALE GENOMIC DNA]</scope>
    <source>
        <strain>IAI39 / ExPEC</strain>
    </source>
</reference>
<evidence type="ECO:0000255" key="1">
    <source>
        <dbReference type="HAMAP-Rule" id="MF_00179"/>
    </source>
</evidence>
<dbReference type="EC" id="3.5.4.25" evidence="1"/>
<dbReference type="EMBL" id="CU928164">
    <property type="protein sequence ID" value="CAR17749.1"/>
    <property type="molecule type" value="Genomic_DNA"/>
</dbReference>
<dbReference type="RefSeq" id="WP_001176295.1">
    <property type="nucleotide sequence ID" value="NC_011750.1"/>
</dbReference>
<dbReference type="RefSeq" id="YP_002407618.1">
    <property type="nucleotide sequence ID" value="NC_011750.1"/>
</dbReference>
<dbReference type="SMR" id="B7NVQ1"/>
<dbReference type="STRING" id="585057.ECIAI39_1618"/>
<dbReference type="GeneID" id="86946614"/>
<dbReference type="KEGG" id="ect:ECIAI39_1618"/>
<dbReference type="PATRIC" id="fig|585057.6.peg.1688"/>
<dbReference type="HOGENOM" id="CLU_020273_2_1_6"/>
<dbReference type="UniPathway" id="UPA00275">
    <property type="reaction ID" value="UER00400"/>
</dbReference>
<dbReference type="Proteomes" id="UP000000749">
    <property type="component" value="Chromosome"/>
</dbReference>
<dbReference type="GO" id="GO:0005829">
    <property type="term" value="C:cytosol"/>
    <property type="evidence" value="ECO:0007669"/>
    <property type="project" value="TreeGrafter"/>
</dbReference>
<dbReference type="GO" id="GO:0005525">
    <property type="term" value="F:GTP binding"/>
    <property type="evidence" value="ECO:0007669"/>
    <property type="project" value="UniProtKB-KW"/>
</dbReference>
<dbReference type="GO" id="GO:0003935">
    <property type="term" value="F:GTP cyclohydrolase II activity"/>
    <property type="evidence" value="ECO:0007669"/>
    <property type="project" value="UniProtKB-UniRule"/>
</dbReference>
<dbReference type="GO" id="GO:0008270">
    <property type="term" value="F:zinc ion binding"/>
    <property type="evidence" value="ECO:0007669"/>
    <property type="project" value="UniProtKB-UniRule"/>
</dbReference>
<dbReference type="GO" id="GO:0009231">
    <property type="term" value="P:riboflavin biosynthetic process"/>
    <property type="evidence" value="ECO:0007669"/>
    <property type="project" value="UniProtKB-UniRule"/>
</dbReference>
<dbReference type="CDD" id="cd00641">
    <property type="entry name" value="GTP_cyclohydro2"/>
    <property type="match status" value="1"/>
</dbReference>
<dbReference type="FunFam" id="3.40.50.10990:FF:000002">
    <property type="entry name" value="GTP cyclohydrolase-2"/>
    <property type="match status" value="1"/>
</dbReference>
<dbReference type="Gene3D" id="3.40.50.10990">
    <property type="entry name" value="GTP cyclohydrolase II"/>
    <property type="match status" value="1"/>
</dbReference>
<dbReference type="HAMAP" id="MF_00179">
    <property type="entry name" value="RibA"/>
    <property type="match status" value="1"/>
</dbReference>
<dbReference type="InterPro" id="IPR032677">
    <property type="entry name" value="GTP_cyclohydro_II"/>
</dbReference>
<dbReference type="InterPro" id="IPR000926">
    <property type="entry name" value="RibA"/>
</dbReference>
<dbReference type="InterPro" id="IPR036144">
    <property type="entry name" value="RibA-like_sf"/>
</dbReference>
<dbReference type="NCBIfam" id="NF001591">
    <property type="entry name" value="PRK00393.1"/>
    <property type="match status" value="1"/>
</dbReference>
<dbReference type="NCBIfam" id="TIGR00505">
    <property type="entry name" value="ribA"/>
    <property type="match status" value="1"/>
</dbReference>
<dbReference type="PANTHER" id="PTHR21327:SF18">
    <property type="entry name" value="3,4-DIHYDROXY-2-BUTANONE 4-PHOSPHATE SYNTHASE"/>
    <property type="match status" value="1"/>
</dbReference>
<dbReference type="PANTHER" id="PTHR21327">
    <property type="entry name" value="GTP CYCLOHYDROLASE II-RELATED"/>
    <property type="match status" value="1"/>
</dbReference>
<dbReference type="Pfam" id="PF00925">
    <property type="entry name" value="GTP_cyclohydro2"/>
    <property type="match status" value="1"/>
</dbReference>
<dbReference type="SUPFAM" id="SSF142695">
    <property type="entry name" value="RibA-like"/>
    <property type="match status" value="1"/>
</dbReference>
<name>RIBA_ECO7I</name>